<keyword id="KW-0106">Calcium</keyword>
<keyword id="KW-1217">Cell adhesion impairing toxin</keyword>
<keyword id="KW-0903">Direct protein sequencing</keyword>
<keyword id="KW-1015">Disulfide bond</keyword>
<keyword id="KW-1206">Fibrinogenolytic toxin</keyword>
<keyword id="KW-1205">Fibrinolytic toxin</keyword>
<keyword id="KW-1199">Hemostasis impairing toxin</keyword>
<keyword id="KW-0378">Hydrolase</keyword>
<keyword id="KW-0479">Metal-binding</keyword>
<keyword id="KW-0482">Metalloprotease</keyword>
<keyword id="KW-1201">Platelet aggregation inhibiting toxin</keyword>
<keyword id="KW-0645">Protease</keyword>
<keyword id="KW-0873">Pyrrolidone carboxylic acid</keyword>
<keyword id="KW-0964">Secreted</keyword>
<keyword id="KW-0732">Signal</keyword>
<keyword id="KW-0800">Toxin</keyword>
<keyword id="KW-0862">Zinc</keyword>
<keyword id="KW-0865">Zymogen</keyword>
<evidence type="ECO:0000250" key="1"/>
<evidence type="ECO:0000250" key="2">
    <source>
        <dbReference type="UniProtKB" id="Q805F6"/>
    </source>
</evidence>
<evidence type="ECO:0000255" key="3"/>
<evidence type="ECO:0000255" key="4">
    <source>
        <dbReference type="PROSITE-ProRule" id="PRU00068"/>
    </source>
</evidence>
<evidence type="ECO:0000255" key="5">
    <source>
        <dbReference type="PROSITE-ProRule" id="PRU00276"/>
    </source>
</evidence>
<evidence type="ECO:0000269" key="6">
    <source>
    </source>
</evidence>
<evidence type="ECO:0000269" key="7">
    <source>
    </source>
</evidence>
<evidence type="ECO:0000269" key="8">
    <source>
    </source>
</evidence>
<evidence type="ECO:0000269" key="9">
    <source>
    </source>
</evidence>
<evidence type="ECO:0000269" key="10">
    <source>
    </source>
</evidence>
<evidence type="ECO:0000269" key="11">
    <source>
    </source>
</evidence>
<evidence type="ECO:0000305" key="12"/>
<evidence type="ECO:0000305" key="13">
    <source>
    </source>
</evidence>
<protein>
    <recommendedName>
        <fullName>Zinc metalloproteinase/disintegrin</fullName>
    </recommendedName>
    <component>
        <recommendedName>
            <fullName>Snake venom metalloproteinase lebetase</fullName>
            <shortName>SVMP</shortName>
            <ecNumber>3.4.24.-</ecNumber>
        </recommendedName>
        <alternativeName>
            <fullName>Fibrinolytic protease</fullName>
        </alternativeName>
        <alternativeName>
            <fullName>Le-3</fullName>
            <shortName>Le3</shortName>
        </alternativeName>
        <alternativeName>
            <fullName>Lebetase II</fullName>
        </alternativeName>
        <alternativeName>
            <fullName>Lebetase-2</fullName>
        </alternativeName>
    </component>
    <component>
        <recommendedName>
            <fullName>Disintegrin VLE5A</fullName>
        </recommendedName>
    </component>
</protein>
<feature type="signal peptide" evidence="3">
    <location>
        <begin position="1"/>
        <end position="20"/>
    </location>
</feature>
<feature type="propeptide" id="PRO_0000318582">
    <location>
        <begin position="21"/>
        <end position="194"/>
    </location>
</feature>
<feature type="chain" id="PRO_5000146862" description="Snake venom metalloproteinase lebetase">
    <location>
        <begin position="195"/>
        <end position="397"/>
    </location>
</feature>
<feature type="propeptide" id="PRO_0000318583" evidence="1">
    <location>
        <begin position="398"/>
        <end position="413"/>
    </location>
</feature>
<feature type="chain" id="PRO_5000146863" description="Disintegrin VLE5A">
    <location>
        <begin position="414"/>
        <end position="478"/>
    </location>
</feature>
<feature type="domain" description="Peptidase M12B" evidence="5">
    <location>
        <begin position="201"/>
        <end position="397"/>
    </location>
</feature>
<feature type="domain" description="Disintegrin" evidence="4">
    <location>
        <begin position="405"/>
        <end position="478"/>
    </location>
</feature>
<feature type="short sequence motif" description="Cell attachment site; atypical (VGD)">
    <location>
        <begin position="456"/>
        <end position="458"/>
    </location>
</feature>
<feature type="active site" evidence="5">
    <location>
        <position position="338"/>
    </location>
</feature>
<feature type="binding site" evidence="1">
    <location>
        <position position="204"/>
    </location>
    <ligand>
        <name>Ca(2+)</name>
        <dbReference type="ChEBI" id="CHEBI:29108"/>
    </ligand>
</feature>
<feature type="binding site" evidence="1">
    <location>
        <position position="288"/>
    </location>
    <ligand>
        <name>Ca(2+)</name>
        <dbReference type="ChEBI" id="CHEBI:29108"/>
    </ligand>
</feature>
<feature type="binding site" evidence="5">
    <location>
        <position position="337"/>
    </location>
    <ligand>
        <name>Zn(2+)</name>
        <dbReference type="ChEBI" id="CHEBI:29105"/>
        <note>catalytic</note>
    </ligand>
</feature>
<feature type="binding site" evidence="5">
    <location>
        <position position="341"/>
    </location>
    <ligand>
        <name>Zn(2+)</name>
        <dbReference type="ChEBI" id="CHEBI:29105"/>
        <note>catalytic</note>
    </ligand>
</feature>
<feature type="binding site" evidence="5">
    <location>
        <position position="347"/>
    </location>
    <ligand>
        <name>Zn(2+)</name>
        <dbReference type="ChEBI" id="CHEBI:29105"/>
        <note>catalytic</note>
    </ligand>
</feature>
<feature type="binding site" evidence="1">
    <location>
        <position position="392"/>
    </location>
    <ligand>
        <name>Ca(2+)</name>
        <dbReference type="ChEBI" id="CHEBI:29108"/>
    </ligand>
</feature>
<feature type="binding site" evidence="1">
    <location>
        <position position="395"/>
    </location>
    <ligand>
        <name>Ca(2+)</name>
        <dbReference type="ChEBI" id="CHEBI:29108"/>
    </ligand>
</feature>
<feature type="modified residue" description="Pyrrolidone carboxylic acid" evidence="1">
    <location>
        <position position="195"/>
    </location>
</feature>
<feature type="disulfide bond" evidence="5">
    <location>
        <begin position="312"/>
        <end position="392"/>
    </location>
</feature>
<feature type="disulfide bond" evidence="5">
    <location>
        <begin position="352"/>
        <end position="376"/>
    </location>
</feature>
<feature type="disulfide bond" evidence="5">
    <location>
        <begin position="354"/>
        <end position="359"/>
    </location>
</feature>
<feature type="disulfide bond" evidence="2">
    <location>
        <begin position="420"/>
        <end position="443"/>
    </location>
</feature>
<feature type="disulfide bond" description="Interchain" evidence="2">
    <location>
        <position position="421"/>
    </location>
</feature>
<feature type="disulfide bond" description="Interchain" evidence="2">
    <location>
        <position position="426"/>
    </location>
</feature>
<feature type="disulfide bond" evidence="2">
    <location>
        <begin position="434"/>
        <end position="440"/>
    </location>
</feature>
<feature type="disulfide bond" evidence="2">
    <location>
        <begin position="439"/>
        <end position="464"/>
    </location>
</feature>
<feature type="disulfide bond" evidence="2 4">
    <location>
        <begin position="452"/>
        <end position="471"/>
    </location>
</feature>
<comment type="function">
    <molecule>Snake venom metalloproteinase lebetase</molecule>
    <text evidence="6 7 8 9 10 11">Fibrinolytic and fibrinogenolytic metalloproteinase that hydrolyzes the Aalpha-chain and more slowly the Bbeta-chain of fibrin and fibrinogen. Its fibrinolytic activity is direct, without any plasminogen activation. Also hydrolyzes casein and B-chain of oxidized insulin. Inhibits ADP-induced and collagen-induced platelet aggregation. Shows low hemorrhagic activity. Cleaves the plasma proteinase inhibitors alpha(2)-macroglobulin (A2M) and pregnancy zone protein (PZP), and is inhibited by them. The metalloprotease has no strict P1-P1' specificity requirement. Hydrolysis at sites with a Pro residue at P1 is observed with bradykinin, substance P, PZP and alpha chain fibrinogen (FGA) (PubMed:11910177).</text>
</comment>
<comment type="function">
    <molecule>Disintegrin VLE5A</molecule>
    <text evidence="1">Poor inhibitor of platelet aggregation. The disintegrin inhibits the adhesion of the alpha-4/beta-1 (ITGA4/ITGB1) integrin to VCAM-1. Inhibition on alpha-2b/beta-3 (ITGA2B/ITGB3) is low (By similarity).</text>
</comment>
<comment type="cofactor">
    <cofactor evidence="1">
        <name>Zn(2+)</name>
        <dbReference type="ChEBI" id="CHEBI:29105"/>
    </cofactor>
    <text evidence="1">Binds 1 zinc ion per subunit.</text>
</comment>
<comment type="activity regulation">
    <text evidence="9 11">Fibrinolytic and caseinolytic activities are inhibited by Cd(2+), Cu(2+) and Co(2+) ions. Not inhibited by Mg(2+), Ca(2+) and Ba(2+). Also inhibited by EDTA, EGTA and 1,10-phenanthroline.</text>
</comment>
<comment type="subunit">
    <text evidence="1">Monomer (metalloproteinase). Heterodimer; disulfide-linked (disintegrin) (By similarity).</text>
</comment>
<comment type="subcellular location">
    <subcellularLocation>
        <location>Secreted</location>
    </subcellularLocation>
</comment>
<comment type="tissue specificity">
    <text>Expressed by the venom gland.</text>
</comment>
<comment type="mass spectrometry" mass="22912.0" error="20.0" method="MALDI" evidence="11">
    <molecule>Snake venom metalloproteinase lebetase</molecule>
</comment>
<comment type="miscellaneous">
    <text evidence="13">2 lebetase isoforms have been isolated designated lebetase I (22.719 Da, pI 5.0) and lebetase II (22.912 Da, pI 5.3).</text>
</comment>
<comment type="miscellaneous">
    <molecule>Disintegrin VLE5A</molecule>
    <text evidence="1">Negative results: does not interact with the collagen-binding alpha-1/beta-1 (ITGA1/ITGB1) and alpha-2/beta-1 (ITGA2/ITGB1) integrins.</text>
</comment>
<comment type="miscellaneous">
    <text>The disintegrin belongs to the dimeric disintegrin subfamily.</text>
</comment>
<comment type="similarity">
    <text evidence="12">Belongs to the venom metalloproteinase (M12B) family. P-II subfamily. P-IIe sub-subfamily.</text>
</comment>
<sequence length="478" mass="53480">MIQVLLVTICLAVFPYQGSSKTLKSGNVNDYEVVNPQAVTGLPKGAVKQPEKKYEDTMQYEFEVNGEPVVLHLEKNRGLFSKDYSETHYSPDGREITTNPAVEDHCYYHGRIQNDADSTASISACNGLKGYFTLRGETYLIEPLKLPDSEAHAVYKYENIEKEDEAPKMCGVTQTNWASDEPIKKASQLNLTPEQQRFEPRYIELVIVADHAMVTKYNGDLAAITTWVHQLVNNINGFYRDLNVHITLSAVEVWTNGDLINVQPAASVTLNLFGEWRERDLLNRRMHDHAQLLTGIDLDDNIIGLAYDDSMCDPRYSVGIVQDHSAIIRLVAVTMAHELGHNLGMNHDGDQCNCGANGCVMSVVLIEQRSYQFSDCSKNKYQTYLTNRNPQCILNQPLRTDTVSTPVSGNELLQNSGNPCCDPVTCQPRRGEHCVSGKCCRNCKFLRAGTVCKRAVGDDMDDYCTGISSDCPRNPYKD</sequence>
<name>VM2L2_MACLB</name>
<organism>
    <name type="scientific">Macrovipera lebetinus</name>
    <name type="common">Levantine viper</name>
    <name type="synonym">Vipera lebetina</name>
    <dbReference type="NCBI Taxonomy" id="3148341"/>
    <lineage>
        <taxon>Eukaryota</taxon>
        <taxon>Metazoa</taxon>
        <taxon>Chordata</taxon>
        <taxon>Craniata</taxon>
        <taxon>Vertebrata</taxon>
        <taxon>Euteleostomi</taxon>
        <taxon>Lepidosauria</taxon>
        <taxon>Squamata</taxon>
        <taxon>Bifurcata</taxon>
        <taxon>Unidentata</taxon>
        <taxon>Episquamata</taxon>
        <taxon>Toxicofera</taxon>
        <taxon>Serpentes</taxon>
        <taxon>Colubroidea</taxon>
        <taxon>Viperidae</taxon>
        <taxon>Viperinae</taxon>
        <taxon>Macrovipera</taxon>
    </lineage>
</organism>
<proteinExistence type="evidence at protein level"/>
<dbReference type="EC" id="3.4.24.-"/>
<dbReference type="EMBL" id="X97894">
    <property type="protein sequence ID" value="CAA66471.1"/>
    <property type="molecule type" value="mRNA"/>
</dbReference>
<dbReference type="PIR" id="JC4880">
    <property type="entry name" value="JC4880"/>
</dbReference>
<dbReference type="SMR" id="Q98995"/>
<dbReference type="MEROPS" id="M12.164"/>
<dbReference type="GO" id="GO:0005576">
    <property type="term" value="C:extracellular region"/>
    <property type="evidence" value="ECO:0007669"/>
    <property type="project" value="UniProtKB-SubCell"/>
</dbReference>
<dbReference type="GO" id="GO:0005886">
    <property type="term" value="C:plasma membrane"/>
    <property type="evidence" value="ECO:0007669"/>
    <property type="project" value="TreeGrafter"/>
</dbReference>
<dbReference type="GO" id="GO:0046872">
    <property type="term" value="F:metal ion binding"/>
    <property type="evidence" value="ECO:0007669"/>
    <property type="project" value="UniProtKB-KW"/>
</dbReference>
<dbReference type="GO" id="GO:0004222">
    <property type="term" value="F:metalloendopeptidase activity"/>
    <property type="evidence" value="ECO:0007669"/>
    <property type="project" value="InterPro"/>
</dbReference>
<dbReference type="GO" id="GO:0090729">
    <property type="term" value="F:toxin activity"/>
    <property type="evidence" value="ECO:0007669"/>
    <property type="project" value="UniProtKB-KW"/>
</dbReference>
<dbReference type="GO" id="GO:0006508">
    <property type="term" value="P:proteolysis"/>
    <property type="evidence" value="ECO:0007669"/>
    <property type="project" value="UniProtKB-KW"/>
</dbReference>
<dbReference type="CDD" id="cd04269">
    <property type="entry name" value="ZnMc_adamalysin_II_like"/>
    <property type="match status" value="1"/>
</dbReference>
<dbReference type="FunFam" id="3.40.390.10:FF:000002">
    <property type="entry name" value="Disintegrin and metalloproteinase domain-containing protein 22"/>
    <property type="match status" value="1"/>
</dbReference>
<dbReference type="Gene3D" id="3.40.390.10">
    <property type="entry name" value="Collagenase (Catalytic Domain)"/>
    <property type="match status" value="1"/>
</dbReference>
<dbReference type="Gene3D" id="4.10.70.10">
    <property type="entry name" value="Disintegrin domain"/>
    <property type="match status" value="1"/>
</dbReference>
<dbReference type="InterPro" id="IPR018358">
    <property type="entry name" value="Disintegrin_CS"/>
</dbReference>
<dbReference type="InterPro" id="IPR001762">
    <property type="entry name" value="Disintegrin_dom"/>
</dbReference>
<dbReference type="InterPro" id="IPR036436">
    <property type="entry name" value="Disintegrin_dom_sf"/>
</dbReference>
<dbReference type="InterPro" id="IPR024079">
    <property type="entry name" value="MetalloPept_cat_dom_sf"/>
</dbReference>
<dbReference type="InterPro" id="IPR001590">
    <property type="entry name" value="Peptidase_M12B"/>
</dbReference>
<dbReference type="InterPro" id="IPR002870">
    <property type="entry name" value="Peptidase_M12B_N"/>
</dbReference>
<dbReference type="InterPro" id="IPR034027">
    <property type="entry name" value="Reprolysin_adamalysin"/>
</dbReference>
<dbReference type="PANTHER" id="PTHR11905">
    <property type="entry name" value="ADAM A DISINTEGRIN AND METALLOPROTEASE DOMAIN"/>
    <property type="match status" value="1"/>
</dbReference>
<dbReference type="PANTHER" id="PTHR11905:SF32">
    <property type="entry name" value="DISINTEGRIN AND METALLOPROTEINASE DOMAIN-CONTAINING PROTEIN 28"/>
    <property type="match status" value="1"/>
</dbReference>
<dbReference type="Pfam" id="PF00200">
    <property type="entry name" value="Disintegrin"/>
    <property type="match status" value="1"/>
</dbReference>
<dbReference type="Pfam" id="PF01562">
    <property type="entry name" value="Pep_M12B_propep"/>
    <property type="match status" value="1"/>
</dbReference>
<dbReference type="Pfam" id="PF01421">
    <property type="entry name" value="Reprolysin"/>
    <property type="match status" value="1"/>
</dbReference>
<dbReference type="PRINTS" id="PR00289">
    <property type="entry name" value="DISINTEGRIN"/>
</dbReference>
<dbReference type="SMART" id="SM00050">
    <property type="entry name" value="DISIN"/>
    <property type="match status" value="1"/>
</dbReference>
<dbReference type="SUPFAM" id="SSF57552">
    <property type="entry name" value="Blood coagulation inhibitor (disintegrin)"/>
    <property type="match status" value="1"/>
</dbReference>
<dbReference type="SUPFAM" id="SSF55486">
    <property type="entry name" value="Metalloproteases ('zincins'), catalytic domain"/>
    <property type="match status" value="1"/>
</dbReference>
<dbReference type="PROSITE" id="PS50215">
    <property type="entry name" value="ADAM_MEPRO"/>
    <property type="match status" value="1"/>
</dbReference>
<dbReference type="PROSITE" id="PS00427">
    <property type="entry name" value="DISINTEGRIN_1"/>
    <property type="match status" value="1"/>
</dbReference>
<dbReference type="PROSITE" id="PS50214">
    <property type="entry name" value="DISINTEGRIN_2"/>
    <property type="match status" value="1"/>
</dbReference>
<dbReference type="PROSITE" id="PS00142">
    <property type="entry name" value="ZINC_PROTEASE"/>
    <property type="match status" value="1"/>
</dbReference>
<accession>Q98995</accession>
<reference key="1">
    <citation type="journal article" date="1996" name="Biochem. Biophys. Res. Commun.">
        <title>cDNA cloning and deduced amino acid sequence of fibrinolytic enzyme (lebetase) from Vipera lebetina snake venom.</title>
        <authorList>
            <person name="Siigur E."/>
            <person name="Aaspollu A."/>
            <person name="Tu A.T."/>
            <person name="Siigur J."/>
        </authorList>
    </citation>
    <scope>NUCLEOTIDE SEQUENCE [MRNA]</scope>
    <scope>PROTEIN SEQUENCE OF 214-236</scope>
    <scope>FUNCTION OF THE METALLOPROTEINASE</scope>
    <scope>SUBUNIT</scope>
    <scope>PYROGLUTAMATE FORMATION AT GLN-195</scope>
    <source>
        <tissue>Venom</tissue>
        <tissue>Venom gland</tissue>
    </source>
</reference>
<reference key="2">
    <citation type="journal article" date="1991" name="Biochim. Biophys. Acta">
        <title>Purification and characterization of lebetase, a fibrinolytic enzyme from Vipera lebetina (snake) venom.</title>
        <authorList>
            <person name="Siigur E."/>
            <person name="Siigur J."/>
        </authorList>
    </citation>
    <scope>FUNCTION OF THE METALLOPROTEINASE</scope>
    <scope>ACTIVITY REGULATION</scope>
    <scope>SUBUNIT</scope>
</reference>
<reference key="3">
    <citation type="journal article" date="1998" name="Thromb. Res.">
        <title>Biochemical characterization of lebetase, a direct-acting fibrinolytic enzyme from Vipera lebetina snake venom.</title>
        <authorList>
            <person name="Siigur J."/>
            <person name="Samel M."/>
            <person name="Tonismagi K."/>
            <person name="Subbi J."/>
            <person name="Siigur E."/>
            <person name="Tu A.T."/>
        </authorList>
    </citation>
    <scope>FUNCTION OF THE METALLOPROTEINASE</scope>
    <scope>ACTIVITY REGULATION</scope>
    <scope>SUBUNIT OF THE METALLOPROTEINASE</scope>
    <scope>MASS SPECTROMETRY</scope>
    <source>
        <tissue>Venom</tissue>
    </source>
</reference>
<reference key="4">
    <citation type="journal article" date="1999" name="Biochim. Biophys. Acta">
        <title>Lebetase, an alpha(beta)-fibrin(ogen)olytic metalloproteinase of Vipera lebetina snake venom, is inhibited by human alpha-macroglobulins.</title>
        <authorList>
            <person name="Saidi N."/>
            <person name="Samel M."/>
            <person name="Siigur J."/>
            <person name="Jensen P.E.H."/>
        </authorList>
    </citation>
    <scope>FUNCTION OF THE METALLOPROTEINASE</scope>
</reference>
<reference key="5">
    <citation type="journal article" date="2000" name="Biochim. Biophys. Acta">
        <title>MALDI-TOF mass spectrometry analysis of substrate specificity of lebetase, a direct-acting fibrinolytic metalloproteinase from Vipera lebetina snake venom.</title>
        <authorList>
            <person name="Trummal K."/>
            <person name="Vija H."/>
            <person name="Subbi J."/>
            <person name="Siigur J."/>
        </authorList>
    </citation>
    <scope>FUNCTION OF THE METALLOPROTEINASE</scope>
</reference>
<reference key="6">
    <citation type="journal article" date="2001" name="Haemostasis">
        <title>Proteases from Vipera lebetina venom affecting coagulation and fibrinolysis.</title>
        <authorList>
            <person name="Siigur J."/>
            <person name="Aaspollu A."/>
            <person name="Tonismagi K."/>
            <person name="Trummal K."/>
            <person name="Samel M."/>
            <person name="Vija H."/>
            <person name="Subbi J."/>
            <person name="Siigur E."/>
        </authorList>
    </citation>
    <scope>FUNCTION</scope>
    <scope>CATALYTIC ACTIVITY</scope>
</reference>